<name>IOLB_BACNA</name>
<evidence type="ECO:0000255" key="1">
    <source>
        <dbReference type="HAMAP-Rule" id="MF_01673"/>
    </source>
</evidence>
<gene>
    <name evidence="1" type="primary">iolB</name>
</gene>
<sequence>MSYLLRKPQSHEVSNGVKLVHEVTTSNSDLTYVEFKVLDLASGSSYTEELKKQEICIVAVTGKITVTDHESTFENIGTRESVFERKPTDSVYISNDRAFEITAVSDARVALCYSPSEKQLPTKLIKAEDNGIEHRGQFSNKRTVHNILPDSDPSANSLLVVEVYTDSGNWSSYPPHKHDQDNLPEESFLEETYYHELDPGQGFVFQRVYTDDRSIDETMTVENENVVIVPAGYHPVGVPDGYTSYYLNVMAGPTRKWKFYNDPAHEWILER</sequence>
<keyword id="KW-0413">Isomerase</keyword>
<organism>
    <name type="scientific">Bacillus subtilis subsp. natto</name>
    <dbReference type="NCBI Taxonomy" id="86029"/>
    <lineage>
        <taxon>Bacteria</taxon>
        <taxon>Bacillati</taxon>
        <taxon>Bacillota</taxon>
        <taxon>Bacilli</taxon>
        <taxon>Bacillales</taxon>
        <taxon>Bacillaceae</taxon>
        <taxon>Bacillus</taxon>
    </lineage>
</organism>
<dbReference type="EC" id="5.3.1.30" evidence="1"/>
<dbReference type="EMBL" id="AB304464">
    <property type="protein sequence ID" value="BAF74777.1"/>
    <property type="molecule type" value="Genomic_DNA"/>
</dbReference>
<dbReference type="RefSeq" id="WP_014481418.1">
    <property type="nucleotide sequence ID" value="NZ_SJSU01000040.1"/>
</dbReference>
<dbReference type="SMR" id="A7BJC5"/>
<dbReference type="UniPathway" id="UPA00076">
    <property type="reaction ID" value="UER00920"/>
</dbReference>
<dbReference type="GO" id="GO:0102482">
    <property type="term" value="F:5-deoxy-D-glucuronate isomerase activity"/>
    <property type="evidence" value="ECO:0007669"/>
    <property type="project" value="UniProtKB-EC"/>
</dbReference>
<dbReference type="GO" id="GO:0008880">
    <property type="term" value="F:glucuronate isomerase activity"/>
    <property type="evidence" value="ECO:0007669"/>
    <property type="project" value="InterPro"/>
</dbReference>
<dbReference type="GO" id="GO:0019310">
    <property type="term" value="P:inositol catabolic process"/>
    <property type="evidence" value="ECO:0007669"/>
    <property type="project" value="UniProtKB-UniRule"/>
</dbReference>
<dbReference type="Gene3D" id="2.60.120.10">
    <property type="entry name" value="Jelly Rolls"/>
    <property type="match status" value="2"/>
</dbReference>
<dbReference type="HAMAP" id="MF_01673">
    <property type="entry name" value="IolB"/>
    <property type="match status" value="1"/>
</dbReference>
<dbReference type="InterPro" id="IPR024203">
    <property type="entry name" value="Deoxy-glucuronate_isom_IolB"/>
</dbReference>
<dbReference type="InterPro" id="IPR023770">
    <property type="entry name" value="IolB_Bacilli"/>
</dbReference>
<dbReference type="InterPro" id="IPR021120">
    <property type="entry name" value="KduI/IolB_isomerase"/>
</dbReference>
<dbReference type="InterPro" id="IPR014710">
    <property type="entry name" value="RmlC-like_jellyroll"/>
</dbReference>
<dbReference type="InterPro" id="IPR011051">
    <property type="entry name" value="RmlC_Cupin_sf"/>
</dbReference>
<dbReference type="NCBIfam" id="TIGR04378">
    <property type="entry name" value="myo_inos_iolB"/>
    <property type="match status" value="1"/>
</dbReference>
<dbReference type="PANTHER" id="PTHR39193">
    <property type="entry name" value="5-DEOXY-GLUCURONATE ISOMERASE"/>
    <property type="match status" value="1"/>
</dbReference>
<dbReference type="PANTHER" id="PTHR39193:SF1">
    <property type="entry name" value="5-DEOXY-GLUCURONATE ISOMERASE"/>
    <property type="match status" value="1"/>
</dbReference>
<dbReference type="Pfam" id="PF04962">
    <property type="entry name" value="KduI"/>
    <property type="match status" value="1"/>
</dbReference>
<dbReference type="PIRSF" id="PIRSF036628">
    <property type="entry name" value="IolB"/>
    <property type="match status" value="1"/>
</dbReference>
<dbReference type="SUPFAM" id="SSF51182">
    <property type="entry name" value="RmlC-like cupins"/>
    <property type="match status" value="1"/>
</dbReference>
<accession>A7BJC5</accession>
<protein>
    <recommendedName>
        <fullName evidence="1">5-deoxy-glucuronate isomerase</fullName>
        <shortName evidence="1">5DG isomerase</shortName>
        <ecNumber evidence="1">5.3.1.30</ecNumber>
    </recommendedName>
</protein>
<feature type="chain" id="PRO_0000352386" description="5-deoxy-glucuronate isomerase">
    <location>
        <begin position="1"/>
        <end position="271"/>
    </location>
</feature>
<proteinExistence type="inferred from homology"/>
<comment type="function">
    <text evidence="1">Involved in the isomerization of 5-deoxy-glucuronate (5DG) to 5-dehydro-2-deoxy-D-gluconate (DKG or 2-deoxy-5-keto-D-gluconate).</text>
</comment>
<comment type="catalytic activity">
    <reaction evidence="1">
        <text>5-deoxy-D-glucuronate = 5-dehydro-2-deoxy-D-gluconate</text>
        <dbReference type="Rhea" id="RHEA:25840"/>
        <dbReference type="ChEBI" id="CHEBI:16669"/>
        <dbReference type="ChEBI" id="CHEBI:58852"/>
        <dbReference type="EC" id="5.3.1.30"/>
    </reaction>
</comment>
<comment type="pathway">
    <text evidence="1">Polyol metabolism; myo-inositol degradation into acetyl-CoA; acetyl-CoA from myo-inositol: step 4/7.</text>
</comment>
<comment type="similarity">
    <text evidence="1">Belongs to the isomerase IolB family.</text>
</comment>
<reference key="1">
    <citation type="journal article" date="2007" name="Biosci. Biotechnol. Biochem.">
        <title>Determination and characterization of IS4Bsu1-insertion loci and identification of a new insertion sequence element of the IS256 family in a natto starter.</title>
        <authorList>
            <person name="Kimura K."/>
            <person name="Itoh Y."/>
        </authorList>
    </citation>
    <scope>NUCLEOTIDE SEQUENCE [GENOMIC DNA]</scope>
    <source>
        <strain>Miyagino</strain>
    </source>
</reference>